<organism>
    <name type="scientific">Chlamydia muridarum (strain MoPn / Nigg)</name>
    <dbReference type="NCBI Taxonomy" id="243161"/>
    <lineage>
        <taxon>Bacteria</taxon>
        <taxon>Pseudomonadati</taxon>
        <taxon>Chlamydiota</taxon>
        <taxon>Chlamydiia</taxon>
        <taxon>Chlamydiales</taxon>
        <taxon>Chlamydiaceae</taxon>
        <taxon>Chlamydia/Chlamydophila group</taxon>
        <taxon>Chlamydia</taxon>
    </lineage>
</organism>
<accession>Q9PLR5</accession>
<sequence length="78" mass="8811">MKEFLAYIVKNLVDRPEEVHLKEVQGTNTIIYELTVAKGDIGKIIGKEGRTIKAIRTLLVSVASRDNVKVSLEIMEER</sequence>
<evidence type="ECO:0000255" key="1">
    <source>
        <dbReference type="HAMAP-Rule" id="MF_00088"/>
    </source>
</evidence>
<comment type="function">
    <text evidence="1">A probable RNA-binding protein.</text>
</comment>
<comment type="subcellular location">
    <subcellularLocation>
        <location evidence="1">Cytoplasm</location>
    </subcellularLocation>
</comment>
<comment type="similarity">
    <text evidence="1">Belongs to the KhpA RNA-binding protein family.</text>
</comment>
<feature type="chain" id="PRO_0000163219" description="RNA-binding protein KhpA">
    <location>
        <begin position="1"/>
        <end position="78"/>
    </location>
</feature>
<feature type="domain" description="KH" evidence="1">
    <location>
        <begin position="29"/>
        <end position="78"/>
    </location>
</feature>
<dbReference type="EMBL" id="AE002160">
    <property type="protein sequence ID" value="AAF38921.1"/>
    <property type="molecule type" value="Genomic_DNA"/>
</dbReference>
<dbReference type="PIR" id="B81748">
    <property type="entry name" value="B81748"/>
</dbReference>
<dbReference type="RefSeq" id="WP_010229169.1">
    <property type="nucleotide sequence ID" value="NZ_CP063055.1"/>
</dbReference>
<dbReference type="SMR" id="Q9PLR5"/>
<dbReference type="GeneID" id="1245555"/>
<dbReference type="KEGG" id="cmu:TC_0030"/>
<dbReference type="eggNOG" id="COG1837">
    <property type="taxonomic scope" value="Bacteria"/>
</dbReference>
<dbReference type="HOGENOM" id="CLU_132074_1_0_0"/>
<dbReference type="OrthoDB" id="9812389at2"/>
<dbReference type="Proteomes" id="UP000000800">
    <property type="component" value="Chromosome"/>
</dbReference>
<dbReference type="GO" id="GO:0005737">
    <property type="term" value="C:cytoplasm"/>
    <property type="evidence" value="ECO:0007669"/>
    <property type="project" value="UniProtKB-SubCell"/>
</dbReference>
<dbReference type="GO" id="GO:0003723">
    <property type="term" value="F:RNA binding"/>
    <property type="evidence" value="ECO:0007669"/>
    <property type="project" value="UniProtKB-UniRule"/>
</dbReference>
<dbReference type="CDD" id="cd22533">
    <property type="entry name" value="KH-II_YlqC-like"/>
    <property type="match status" value="1"/>
</dbReference>
<dbReference type="Gene3D" id="3.30.300.20">
    <property type="match status" value="1"/>
</dbReference>
<dbReference type="HAMAP" id="MF_00088">
    <property type="entry name" value="KhpA"/>
    <property type="match status" value="1"/>
</dbReference>
<dbReference type="InterPro" id="IPR015946">
    <property type="entry name" value="KH_dom-like_a/b"/>
</dbReference>
<dbReference type="InterPro" id="IPR009019">
    <property type="entry name" value="KH_sf_prok-type"/>
</dbReference>
<dbReference type="InterPro" id="IPR020627">
    <property type="entry name" value="KhpA"/>
</dbReference>
<dbReference type="NCBIfam" id="NF002201">
    <property type="entry name" value="PRK01064.1"/>
    <property type="match status" value="1"/>
</dbReference>
<dbReference type="PANTHER" id="PTHR34654:SF1">
    <property type="entry name" value="RNA-BINDING PROTEIN KHPA"/>
    <property type="match status" value="1"/>
</dbReference>
<dbReference type="PANTHER" id="PTHR34654">
    <property type="entry name" value="UPF0109 PROTEIN SCO5592"/>
    <property type="match status" value="1"/>
</dbReference>
<dbReference type="Pfam" id="PF13083">
    <property type="entry name" value="KH_KhpA-B"/>
    <property type="match status" value="1"/>
</dbReference>
<dbReference type="SUPFAM" id="SSF54814">
    <property type="entry name" value="Prokaryotic type KH domain (KH-domain type II)"/>
    <property type="match status" value="1"/>
</dbReference>
<dbReference type="PROSITE" id="PS50084">
    <property type="entry name" value="KH_TYPE_1"/>
    <property type="match status" value="1"/>
</dbReference>
<keyword id="KW-0963">Cytoplasm</keyword>
<keyword id="KW-0694">RNA-binding</keyword>
<protein>
    <recommendedName>
        <fullName evidence="1">RNA-binding protein KhpA</fullName>
    </recommendedName>
    <alternativeName>
        <fullName evidence="1">KH-domain protein A</fullName>
    </alternativeName>
</protein>
<gene>
    <name evidence="1" type="primary">khpA</name>
    <name type="ordered locus">TC_0030</name>
</gene>
<reference key="1">
    <citation type="journal article" date="2000" name="Nucleic Acids Res.">
        <title>Genome sequences of Chlamydia trachomatis MoPn and Chlamydia pneumoniae AR39.</title>
        <authorList>
            <person name="Read T.D."/>
            <person name="Brunham R.C."/>
            <person name="Shen C."/>
            <person name="Gill S.R."/>
            <person name="Heidelberg J.F."/>
            <person name="White O."/>
            <person name="Hickey E.K."/>
            <person name="Peterson J.D."/>
            <person name="Utterback T.R."/>
            <person name="Berry K.J."/>
            <person name="Bass S."/>
            <person name="Linher K.D."/>
            <person name="Weidman J.F."/>
            <person name="Khouri H.M."/>
            <person name="Craven B."/>
            <person name="Bowman C."/>
            <person name="Dodson R.J."/>
            <person name="Gwinn M.L."/>
            <person name="Nelson W.C."/>
            <person name="DeBoy R.T."/>
            <person name="Kolonay J.F."/>
            <person name="McClarty G."/>
            <person name="Salzberg S.L."/>
            <person name="Eisen J.A."/>
            <person name="Fraser C.M."/>
        </authorList>
    </citation>
    <scope>NUCLEOTIDE SEQUENCE [LARGE SCALE GENOMIC DNA]</scope>
    <source>
        <strain>MoPn / Nigg</strain>
    </source>
</reference>
<name>KHPA_CHLMU</name>
<proteinExistence type="inferred from homology"/>